<evidence type="ECO:0000255" key="1">
    <source>
        <dbReference type="HAMAP-Rule" id="MF_00291"/>
    </source>
</evidence>
<evidence type="ECO:0000256" key="2">
    <source>
        <dbReference type="SAM" id="MobiDB-lite"/>
    </source>
</evidence>
<evidence type="ECO:0000305" key="3"/>
<keyword id="KW-0687">Ribonucleoprotein</keyword>
<keyword id="KW-0689">Ribosomal protein</keyword>
<accession>Q5HGH6</accession>
<comment type="similarity">
    <text evidence="1">Belongs to the universal ribosomal protein uS2 family.</text>
</comment>
<organism>
    <name type="scientific">Staphylococcus aureus (strain COL)</name>
    <dbReference type="NCBI Taxonomy" id="93062"/>
    <lineage>
        <taxon>Bacteria</taxon>
        <taxon>Bacillati</taxon>
        <taxon>Bacillota</taxon>
        <taxon>Bacilli</taxon>
        <taxon>Bacillales</taxon>
        <taxon>Staphylococcaceae</taxon>
        <taxon>Staphylococcus</taxon>
    </lineage>
</organism>
<sequence>MAVISMKQLLEAGVHFGHQTRRWNPKMKKYIFTERNGIYIIDLQKTVKKVDEAYNFLKQVSEDGGQVLFVGTKKQAQESVKSEAERAGQFYINQRWLGGLLTNYKTISKRIKRISEIEKMEEDGLFEVLPKKEVVELKKEYDRLIKFLGGIRDMKSMPQALFVVDPRKERNAIAEARKLNIPIVGIVDTNCDPDEIDYVIPANDDAIRAVKLLTAKMADAILEGQQGVSNEEVAAEQNIDLDEKEKSEETEATEATEE</sequence>
<gene>
    <name evidence="1" type="primary">rpsB</name>
    <name type="ordered locus">SACOL1274</name>
</gene>
<proteinExistence type="inferred from homology"/>
<dbReference type="EMBL" id="CP000046">
    <property type="protein sequence ID" value="AAW38105.1"/>
    <property type="molecule type" value="Genomic_DNA"/>
</dbReference>
<dbReference type="RefSeq" id="WP_000268483.1">
    <property type="nucleotide sequence ID" value="NC_002951.2"/>
</dbReference>
<dbReference type="SMR" id="Q5HGH6"/>
<dbReference type="KEGG" id="sac:SACOL1274"/>
<dbReference type="HOGENOM" id="CLU_040318_1_2_9"/>
<dbReference type="Proteomes" id="UP000000530">
    <property type="component" value="Chromosome"/>
</dbReference>
<dbReference type="GO" id="GO:0022627">
    <property type="term" value="C:cytosolic small ribosomal subunit"/>
    <property type="evidence" value="ECO:0007669"/>
    <property type="project" value="TreeGrafter"/>
</dbReference>
<dbReference type="GO" id="GO:0003735">
    <property type="term" value="F:structural constituent of ribosome"/>
    <property type="evidence" value="ECO:0007669"/>
    <property type="project" value="InterPro"/>
</dbReference>
<dbReference type="GO" id="GO:0006412">
    <property type="term" value="P:translation"/>
    <property type="evidence" value="ECO:0007669"/>
    <property type="project" value="UniProtKB-UniRule"/>
</dbReference>
<dbReference type="CDD" id="cd01425">
    <property type="entry name" value="RPS2"/>
    <property type="match status" value="1"/>
</dbReference>
<dbReference type="FunFam" id="1.10.287.610:FF:000001">
    <property type="entry name" value="30S ribosomal protein S2"/>
    <property type="match status" value="1"/>
</dbReference>
<dbReference type="Gene3D" id="3.40.50.10490">
    <property type="entry name" value="Glucose-6-phosphate isomerase like protein, domain 1"/>
    <property type="match status" value="1"/>
</dbReference>
<dbReference type="Gene3D" id="1.10.287.610">
    <property type="entry name" value="Helix hairpin bin"/>
    <property type="match status" value="1"/>
</dbReference>
<dbReference type="HAMAP" id="MF_00291_B">
    <property type="entry name" value="Ribosomal_uS2_B"/>
    <property type="match status" value="1"/>
</dbReference>
<dbReference type="InterPro" id="IPR001865">
    <property type="entry name" value="Ribosomal_uS2"/>
</dbReference>
<dbReference type="InterPro" id="IPR005706">
    <property type="entry name" value="Ribosomal_uS2_bac/mit/plastid"/>
</dbReference>
<dbReference type="InterPro" id="IPR018130">
    <property type="entry name" value="Ribosomal_uS2_CS"/>
</dbReference>
<dbReference type="InterPro" id="IPR023591">
    <property type="entry name" value="Ribosomal_uS2_flav_dom_sf"/>
</dbReference>
<dbReference type="NCBIfam" id="TIGR01011">
    <property type="entry name" value="rpsB_bact"/>
    <property type="match status" value="1"/>
</dbReference>
<dbReference type="PANTHER" id="PTHR12534">
    <property type="entry name" value="30S RIBOSOMAL PROTEIN S2 PROKARYOTIC AND ORGANELLAR"/>
    <property type="match status" value="1"/>
</dbReference>
<dbReference type="PANTHER" id="PTHR12534:SF0">
    <property type="entry name" value="SMALL RIBOSOMAL SUBUNIT PROTEIN US2M"/>
    <property type="match status" value="1"/>
</dbReference>
<dbReference type="Pfam" id="PF00318">
    <property type="entry name" value="Ribosomal_S2"/>
    <property type="match status" value="1"/>
</dbReference>
<dbReference type="PRINTS" id="PR00395">
    <property type="entry name" value="RIBOSOMALS2"/>
</dbReference>
<dbReference type="SUPFAM" id="SSF52313">
    <property type="entry name" value="Ribosomal protein S2"/>
    <property type="match status" value="1"/>
</dbReference>
<dbReference type="PROSITE" id="PS00962">
    <property type="entry name" value="RIBOSOMAL_S2_1"/>
    <property type="match status" value="1"/>
</dbReference>
<dbReference type="PROSITE" id="PS00963">
    <property type="entry name" value="RIBOSOMAL_S2_2"/>
    <property type="match status" value="1"/>
</dbReference>
<reference key="1">
    <citation type="journal article" date="2005" name="J. Bacteriol.">
        <title>Insights on evolution of virulence and resistance from the complete genome analysis of an early methicillin-resistant Staphylococcus aureus strain and a biofilm-producing methicillin-resistant Staphylococcus epidermidis strain.</title>
        <authorList>
            <person name="Gill S.R."/>
            <person name="Fouts D.E."/>
            <person name="Archer G.L."/>
            <person name="Mongodin E.F."/>
            <person name="DeBoy R.T."/>
            <person name="Ravel J."/>
            <person name="Paulsen I.T."/>
            <person name="Kolonay J.F."/>
            <person name="Brinkac L.M."/>
            <person name="Beanan M.J."/>
            <person name="Dodson R.J."/>
            <person name="Daugherty S.C."/>
            <person name="Madupu R."/>
            <person name="Angiuoli S.V."/>
            <person name="Durkin A.S."/>
            <person name="Haft D.H."/>
            <person name="Vamathevan J.J."/>
            <person name="Khouri H."/>
            <person name="Utterback T.R."/>
            <person name="Lee C."/>
            <person name="Dimitrov G."/>
            <person name="Jiang L."/>
            <person name="Qin H."/>
            <person name="Weidman J."/>
            <person name="Tran K."/>
            <person name="Kang K.H."/>
            <person name="Hance I.R."/>
            <person name="Nelson K.E."/>
            <person name="Fraser C.M."/>
        </authorList>
    </citation>
    <scope>NUCLEOTIDE SEQUENCE [LARGE SCALE GENOMIC DNA]</scope>
    <source>
        <strain>COL</strain>
    </source>
</reference>
<protein>
    <recommendedName>
        <fullName evidence="1">Small ribosomal subunit protein uS2</fullName>
    </recommendedName>
    <alternativeName>
        <fullName evidence="3">30S ribosomal protein S2</fullName>
    </alternativeName>
</protein>
<feature type="chain" id="PRO_0000134238" description="Small ribosomal subunit protein uS2">
    <location>
        <begin position="1"/>
        <end position="258"/>
    </location>
</feature>
<feature type="region of interest" description="Disordered" evidence="2">
    <location>
        <begin position="226"/>
        <end position="258"/>
    </location>
</feature>
<name>RS2_STAAC</name>